<feature type="chain" id="PRO_1000095954" description="S-adenosylmethionine synthase">
    <location>
        <begin position="1"/>
        <end position="408"/>
    </location>
</feature>
<feature type="binding site" evidence="1">
    <location>
        <begin position="142"/>
        <end position="147"/>
    </location>
    <ligand>
        <name>ATP</name>
        <dbReference type="ChEBI" id="CHEBI:30616"/>
    </ligand>
</feature>
<evidence type="ECO:0000255" key="1">
    <source>
        <dbReference type="HAMAP-Rule" id="MF_00136"/>
    </source>
</evidence>
<protein>
    <recommendedName>
        <fullName evidence="1">S-adenosylmethionine synthase</fullName>
        <shortName evidence="1">AdoMet synthase</shortName>
        <ecNumber evidence="1">2.5.1.6</ecNumber>
    </recommendedName>
    <alternativeName>
        <fullName evidence="1">Methionine adenosyltransferase</fullName>
    </alternativeName>
</protein>
<comment type="function">
    <text evidence="1">Catalyzes the formation of S-adenosylmethionine from methionine and ATP.</text>
</comment>
<comment type="catalytic activity">
    <reaction evidence="1">
        <text>L-methionine + ATP + H2O = S-adenosyl-L-methionine + phosphate + diphosphate</text>
        <dbReference type="Rhea" id="RHEA:21080"/>
        <dbReference type="ChEBI" id="CHEBI:15377"/>
        <dbReference type="ChEBI" id="CHEBI:30616"/>
        <dbReference type="ChEBI" id="CHEBI:33019"/>
        <dbReference type="ChEBI" id="CHEBI:43474"/>
        <dbReference type="ChEBI" id="CHEBI:57844"/>
        <dbReference type="ChEBI" id="CHEBI:59789"/>
        <dbReference type="EC" id="2.5.1.6"/>
    </reaction>
</comment>
<comment type="cofactor">
    <cofactor evidence="1">
        <name>Mg(2+)</name>
        <dbReference type="ChEBI" id="CHEBI:18420"/>
    </cofactor>
</comment>
<comment type="pathway">
    <text evidence="1">Amino-acid biosynthesis; S-adenosyl-L-methionine biosynthesis; S-adenosyl-L-methionine from L-methionine: step 1/1.</text>
</comment>
<comment type="similarity">
    <text evidence="1">Belongs to the AdoMet synthase 2 family.</text>
</comment>
<keyword id="KW-0067">ATP-binding</keyword>
<keyword id="KW-0460">Magnesium</keyword>
<keyword id="KW-0547">Nucleotide-binding</keyword>
<keyword id="KW-0554">One-carbon metabolism</keyword>
<keyword id="KW-0808">Transferase</keyword>
<gene>
    <name evidence="1" type="primary">mat</name>
    <name type="ordered locus">OE_2857F</name>
</gene>
<dbReference type="EC" id="2.5.1.6" evidence="1"/>
<dbReference type="EMBL" id="AM774415">
    <property type="protein sequence ID" value="CAP13925.1"/>
    <property type="molecule type" value="Genomic_DNA"/>
</dbReference>
<dbReference type="RefSeq" id="WP_010902940.1">
    <property type="nucleotide sequence ID" value="NC_010364.1"/>
</dbReference>
<dbReference type="SMR" id="B0R5A8"/>
<dbReference type="EnsemblBacteria" id="CAP13925">
    <property type="protein sequence ID" value="CAP13925"/>
    <property type="gene ID" value="OE_2857F"/>
</dbReference>
<dbReference type="KEGG" id="hsl:OE_2857F"/>
<dbReference type="HOGENOM" id="CLU_057642_0_0_2"/>
<dbReference type="PhylomeDB" id="B0R5A8"/>
<dbReference type="UniPathway" id="UPA00315">
    <property type="reaction ID" value="UER00080"/>
</dbReference>
<dbReference type="Proteomes" id="UP000001321">
    <property type="component" value="Chromosome"/>
</dbReference>
<dbReference type="GO" id="GO:0005524">
    <property type="term" value="F:ATP binding"/>
    <property type="evidence" value="ECO:0007669"/>
    <property type="project" value="UniProtKB-UniRule"/>
</dbReference>
<dbReference type="GO" id="GO:0000287">
    <property type="term" value="F:magnesium ion binding"/>
    <property type="evidence" value="ECO:0007669"/>
    <property type="project" value="UniProtKB-UniRule"/>
</dbReference>
<dbReference type="GO" id="GO:0004478">
    <property type="term" value="F:methionine adenosyltransferase activity"/>
    <property type="evidence" value="ECO:0007669"/>
    <property type="project" value="UniProtKB-UniRule"/>
</dbReference>
<dbReference type="GO" id="GO:0006730">
    <property type="term" value="P:one-carbon metabolic process"/>
    <property type="evidence" value="ECO:0007669"/>
    <property type="project" value="UniProtKB-KW"/>
</dbReference>
<dbReference type="GO" id="GO:0006556">
    <property type="term" value="P:S-adenosylmethionine biosynthetic process"/>
    <property type="evidence" value="ECO:0007669"/>
    <property type="project" value="UniProtKB-UniRule"/>
</dbReference>
<dbReference type="Gene3D" id="3.30.300.10">
    <property type="match status" value="1"/>
</dbReference>
<dbReference type="Gene3D" id="3.30.300.280">
    <property type="entry name" value="S-adenosylmethionine synthetase, C-terminal domain"/>
    <property type="match status" value="1"/>
</dbReference>
<dbReference type="HAMAP" id="MF_00136">
    <property type="entry name" value="S_AdoMet_synth2"/>
    <property type="match status" value="1"/>
</dbReference>
<dbReference type="InterPro" id="IPR027790">
    <property type="entry name" value="AdoMet_synthase_2_family"/>
</dbReference>
<dbReference type="InterPro" id="IPR042544">
    <property type="entry name" value="AdoMet_synthase_3"/>
</dbReference>
<dbReference type="InterPro" id="IPR002795">
    <property type="entry name" value="S-AdoMet_synthetase_arc"/>
</dbReference>
<dbReference type="NCBIfam" id="NF003364">
    <property type="entry name" value="PRK04439.1-3"/>
    <property type="match status" value="1"/>
</dbReference>
<dbReference type="NCBIfam" id="NF003366">
    <property type="entry name" value="PRK04439.1-5"/>
    <property type="match status" value="1"/>
</dbReference>
<dbReference type="PANTHER" id="PTHR36697">
    <property type="entry name" value="S-ADENOSYLMETHIONINE SYNTHASE"/>
    <property type="match status" value="1"/>
</dbReference>
<dbReference type="PANTHER" id="PTHR36697:SF1">
    <property type="entry name" value="S-ADENOSYLMETHIONINE SYNTHASE"/>
    <property type="match status" value="1"/>
</dbReference>
<dbReference type="Pfam" id="PF01941">
    <property type="entry name" value="AdoMet_Synthase"/>
    <property type="match status" value="1"/>
</dbReference>
<organism>
    <name type="scientific">Halobacterium salinarum (strain ATCC 29341 / DSM 671 / R1)</name>
    <dbReference type="NCBI Taxonomy" id="478009"/>
    <lineage>
        <taxon>Archaea</taxon>
        <taxon>Methanobacteriati</taxon>
        <taxon>Methanobacteriota</taxon>
        <taxon>Stenosarchaea group</taxon>
        <taxon>Halobacteria</taxon>
        <taxon>Halobacteriales</taxon>
        <taxon>Halobacteriaceae</taxon>
        <taxon>Halobacterium</taxon>
        <taxon>Halobacterium salinarum NRC-34001</taxon>
    </lineage>
</organism>
<name>METK_HALS3</name>
<reference key="1">
    <citation type="journal article" date="2008" name="Genomics">
        <title>Evolution in the laboratory: the genome of Halobacterium salinarum strain R1 compared to that of strain NRC-1.</title>
        <authorList>
            <person name="Pfeiffer F."/>
            <person name="Schuster S.C."/>
            <person name="Broicher A."/>
            <person name="Falb M."/>
            <person name="Palm P."/>
            <person name="Rodewald K."/>
            <person name="Ruepp A."/>
            <person name="Soppa J."/>
            <person name="Tittor J."/>
            <person name="Oesterhelt D."/>
        </authorList>
    </citation>
    <scope>NUCLEOTIDE SEQUENCE [LARGE SCALE GENOMIC DNA]</scope>
    <source>
        <strain>ATCC 29341 / DSM 671 / R1</strain>
    </source>
</reference>
<sequence>MTDRNIQVQSLDRSAVEDDAVEIVERKGLGHPDSICDGIAEHVCETLAREYRDRVGHVLHFNTDETQLVAGDAAPAFGGGNVIDPIYILVVGRATSHYVEADGTEHHIPVESIALEAAREYLRETLPHLDLETDVIVDVKLGEGSGDLQDVFTDDDDGPAVPMANDTSFGVGHAPLTETERIVLEAERSLNGPYAEHTPAVGEDVKVMGKREDDHIDLTIAAALVDAHVPDMDAYIAQVEAIREHVFDLATEHTDREVTVHVNTADDYESGSIYLTTTGTSAEQGDDGSVGRGNRANGLITPNRAMSMEATSGKNPVNHIGKIYNLLSTQIAEAVVAEVDGIRDLRVRLLSQIGRPIDEPHVADVEVVTEDGTAVADVDAEIERIVDAQLASVTDLTRRVIDGERTTF</sequence>
<proteinExistence type="inferred from homology"/>
<accession>B0R5A8</accession>